<proteinExistence type="inferred from homology"/>
<keyword id="KW-0997">Cell inner membrane</keyword>
<keyword id="KW-1003">Cell membrane</keyword>
<keyword id="KW-0328">Glycosyltransferase</keyword>
<keyword id="KW-0472">Membrane</keyword>
<keyword id="KW-1185">Reference proteome</keyword>
<keyword id="KW-0808">Transferase</keyword>
<sequence length="359" mass="40543">MTVLIHVLGSDIPHHNHTVLRFFNDTLAATSEHAREFMVAGEDNGFTESCPALSLRFYGSKKALAQAVIAKAKANRRQRFFFHGQFNTSLWLALLSGGIKPAQFYWHIWGADLYEVSHGLKFRLFYPLRRIAQGRVGGVFATRGDLSYFARQHPDVRGELLYFPTRMDPSLNAMAKERQRAGKLTILVGNSGDRSNQHIAALRAVYQQFGDTVNVVVPMGYPANNQDYIDEVRQAGLALFSAENLQILSEKMEFDAYLALLRQCDLGYFIFARQQGIGTLCLLIQADIPCVLNRDNPFWQDMAEQHLPVLFTTDDLNEQVVREAQRQLASVDKSGITFFSPNYLQPWHNALRIAAGEAE</sequence>
<name>WECF_SALTY</name>
<evidence type="ECO:0000255" key="1">
    <source>
        <dbReference type="HAMAP-Rule" id="MF_01002"/>
    </source>
</evidence>
<dbReference type="EC" id="2.4.1.325" evidence="1"/>
<dbReference type="EMBL" id="AF233324">
    <property type="protein sequence ID" value="AAF33460.1"/>
    <property type="molecule type" value="Genomic_DNA"/>
</dbReference>
<dbReference type="EMBL" id="AE006468">
    <property type="protein sequence ID" value="AAL22776.1"/>
    <property type="molecule type" value="Genomic_DNA"/>
</dbReference>
<dbReference type="RefSeq" id="NP_462817.1">
    <property type="nucleotide sequence ID" value="NC_003197.2"/>
</dbReference>
<dbReference type="RefSeq" id="WP_000217186.1">
    <property type="nucleotide sequence ID" value="NC_003197.2"/>
</dbReference>
<dbReference type="STRING" id="99287.STM3927"/>
<dbReference type="CAZy" id="GT56">
    <property type="family name" value="Glycosyltransferase Family 56"/>
</dbReference>
<dbReference type="PaxDb" id="99287-STM3927"/>
<dbReference type="GeneID" id="1255453"/>
<dbReference type="KEGG" id="stm:STM3927"/>
<dbReference type="PATRIC" id="fig|99287.12.peg.4148"/>
<dbReference type="HOGENOM" id="CLU_066584_0_0_6"/>
<dbReference type="OMA" id="VIVPMGY"/>
<dbReference type="PhylomeDB" id="Q9L6Q8"/>
<dbReference type="BioCyc" id="SENT99287:STM3927-MONOMER"/>
<dbReference type="UniPathway" id="UPA00566"/>
<dbReference type="Proteomes" id="UP000001014">
    <property type="component" value="Chromosome"/>
</dbReference>
<dbReference type="GO" id="GO:0005886">
    <property type="term" value="C:plasma membrane"/>
    <property type="evidence" value="ECO:0007669"/>
    <property type="project" value="UniProtKB-SubCell"/>
</dbReference>
<dbReference type="GO" id="GO:0102031">
    <property type="term" value="F:4-acetamido-4,6-dideoxy-D-galactose transferase activity"/>
    <property type="evidence" value="ECO:0007669"/>
    <property type="project" value="UniProtKB-EC"/>
</dbReference>
<dbReference type="GO" id="GO:0008417">
    <property type="term" value="F:fucosyltransferase activity"/>
    <property type="evidence" value="ECO:0007669"/>
    <property type="project" value="InterPro"/>
</dbReference>
<dbReference type="GO" id="GO:0009246">
    <property type="term" value="P:enterobacterial common antigen biosynthetic process"/>
    <property type="evidence" value="ECO:0007669"/>
    <property type="project" value="UniProtKB-UniRule"/>
</dbReference>
<dbReference type="GO" id="GO:0036065">
    <property type="term" value="P:fucosylation"/>
    <property type="evidence" value="ECO:0007669"/>
    <property type="project" value="InterPro"/>
</dbReference>
<dbReference type="HAMAP" id="MF_01002">
    <property type="entry name" value="WecF_RffT"/>
    <property type="match status" value="1"/>
</dbReference>
<dbReference type="InterPro" id="IPR009993">
    <property type="entry name" value="WecF"/>
</dbReference>
<dbReference type="NCBIfam" id="NF002753">
    <property type="entry name" value="PRK02797.1-2"/>
    <property type="match status" value="1"/>
</dbReference>
<dbReference type="NCBIfam" id="NF002754">
    <property type="entry name" value="PRK02797.1-3"/>
    <property type="match status" value="1"/>
</dbReference>
<dbReference type="Pfam" id="PF07429">
    <property type="entry name" value="Glyco_transf_56"/>
    <property type="match status" value="1"/>
</dbReference>
<gene>
    <name evidence="1" type="primary">wecF</name>
    <name evidence="1" type="synonym">rffT</name>
    <name type="ordered locus">STM3927</name>
    <name type="ORF">STMD1.63</name>
</gene>
<organism>
    <name type="scientific">Salmonella typhimurium (strain LT2 / SGSC1412 / ATCC 700720)</name>
    <dbReference type="NCBI Taxonomy" id="99287"/>
    <lineage>
        <taxon>Bacteria</taxon>
        <taxon>Pseudomonadati</taxon>
        <taxon>Pseudomonadota</taxon>
        <taxon>Gammaproteobacteria</taxon>
        <taxon>Enterobacterales</taxon>
        <taxon>Enterobacteriaceae</taxon>
        <taxon>Salmonella</taxon>
    </lineage>
</organism>
<feature type="chain" id="PRO_0000216188" description="TDP-N-acetylfucosamine:lipid II N-acetylfucosaminyltransferase">
    <location>
        <begin position="1"/>
        <end position="359"/>
    </location>
</feature>
<comment type="function">
    <text evidence="1">Catalyzes the synthesis of Und-PP-GlcNAc-ManNAcA-Fuc4NAc (Lipid III), the third lipid-linked intermediate involved in ECA synthesis.</text>
</comment>
<comment type="catalytic activity">
    <reaction evidence="1">
        <text>beta-D-ManNAcA-(1-&gt;4)-alpha-D-GlcNAc-di-trans,octa-cis-undecaprenyl diphosphate + dTDP-4-acetamido-4,6-dideoxy-alpha-D-galactose = alpha-D-FucNAc4-(1-&gt;4)-beta-D-ManNAcA-(1-&gt;4)-D-GlcNAc-undecaprenyl diphosphate + dTDP + H(+)</text>
        <dbReference type="Rhea" id="RHEA:28759"/>
        <dbReference type="ChEBI" id="CHEBI:15378"/>
        <dbReference type="ChEBI" id="CHEBI:58369"/>
        <dbReference type="ChEBI" id="CHEBI:61495"/>
        <dbReference type="ChEBI" id="CHEBI:61496"/>
        <dbReference type="ChEBI" id="CHEBI:68493"/>
        <dbReference type="EC" id="2.4.1.325"/>
    </reaction>
</comment>
<comment type="pathway">
    <text evidence="1">Bacterial outer membrane biogenesis; enterobacterial common antigen biosynthesis.</text>
</comment>
<comment type="subcellular location">
    <subcellularLocation>
        <location evidence="1">Cell inner membrane</location>
        <topology evidence="1">Peripheral membrane protein</topology>
    </subcellularLocation>
</comment>
<comment type="similarity">
    <text evidence="1">Belongs to the glycosyltransferase 56 family.</text>
</comment>
<protein>
    <recommendedName>
        <fullName evidence="1">TDP-N-acetylfucosamine:lipid II N-acetylfucosaminyltransferase</fullName>
        <ecNumber evidence="1">2.4.1.325</ecNumber>
    </recommendedName>
    <alternativeName>
        <fullName evidence="1">4-alpha-L-fucosyltransferase</fullName>
    </alternativeName>
    <alternativeName>
        <fullName evidence="1">TDP-Fuc4NAc:lipid II Fuc4NAc transferase</fullName>
        <shortName evidence="1">Fuc4NAc transferase</shortName>
    </alternativeName>
</protein>
<accession>Q9L6Q8</accession>
<reference key="1">
    <citation type="journal article" date="2001" name="Nature">
        <title>Complete genome sequence of Salmonella enterica serovar Typhimurium LT2.</title>
        <authorList>
            <person name="McClelland M."/>
            <person name="Sanderson K.E."/>
            <person name="Spieth J."/>
            <person name="Clifton S.W."/>
            <person name="Latreille P."/>
            <person name="Courtney L."/>
            <person name="Porwollik S."/>
            <person name="Ali J."/>
            <person name="Dante M."/>
            <person name="Du F."/>
            <person name="Hou S."/>
            <person name="Layman D."/>
            <person name="Leonard S."/>
            <person name="Nguyen C."/>
            <person name="Scott K."/>
            <person name="Holmes A."/>
            <person name="Grewal N."/>
            <person name="Mulvaney E."/>
            <person name="Ryan E."/>
            <person name="Sun H."/>
            <person name="Florea L."/>
            <person name="Miller W."/>
            <person name="Stoneking T."/>
            <person name="Nhan M."/>
            <person name="Waterston R."/>
            <person name="Wilson R.K."/>
        </authorList>
    </citation>
    <scope>NUCLEOTIDE SEQUENCE [LARGE SCALE GENOMIC DNA]</scope>
    <source>
        <strain>LT2 / SGSC1412 / ATCC 700720</strain>
    </source>
</reference>